<organism>
    <name type="scientific">Lysinibacillus sphaericus (strain C3-41)</name>
    <dbReference type="NCBI Taxonomy" id="444177"/>
    <lineage>
        <taxon>Bacteria</taxon>
        <taxon>Bacillati</taxon>
        <taxon>Bacillota</taxon>
        <taxon>Bacilli</taxon>
        <taxon>Bacillales</taxon>
        <taxon>Bacillaceae</taxon>
        <taxon>Lysinibacillus</taxon>
    </lineage>
</organism>
<dbReference type="EC" id="6.-.-.-" evidence="1"/>
<dbReference type="EMBL" id="CP000817">
    <property type="protein sequence ID" value="ACA39030.1"/>
    <property type="molecule type" value="Genomic_DNA"/>
</dbReference>
<dbReference type="RefSeq" id="WP_012293150.1">
    <property type="nucleotide sequence ID" value="NC_010382.1"/>
</dbReference>
<dbReference type="SMR" id="B1HPX8"/>
<dbReference type="EnsemblBacteria" id="ACA39030">
    <property type="protein sequence ID" value="ACA39030"/>
    <property type="gene ID" value="Bsph_1424"/>
</dbReference>
<dbReference type="KEGG" id="lsp:Bsph_1424"/>
<dbReference type="HOGENOM" id="CLU_022249_1_0_9"/>
<dbReference type="Proteomes" id="UP000002164">
    <property type="component" value="Chromosome"/>
</dbReference>
<dbReference type="GO" id="GO:0016874">
    <property type="term" value="F:ligase activity"/>
    <property type="evidence" value="ECO:0007669"/>
    <property type="project" value="UniProtKB-UniRule"/>
</dbReference>
<dbReference type="HAMAP" id="MF_01867">
    <property type="entry name" value="BshC"/>
    <property type="match status" value="1"/>
</dbReference>
<dbReference type="InterPro" id="IPR011199">
    <property type="entry name" value="Bacillithiol_biosynth_BshC"/>
</dbReference>
<dbReference type="InterPro" id="IPR055399">
    <property type="entry name" value="CC_BshC"/>
</dbReference>
<dbReference type="InterPro" id="IPR055398">
    <property type="entry name" value="Rossmann-like_BshC"/>
</dbReference>
<dbReference type="NCBIfam" id="TIGR03998">
    <property type="entry name" value="thiol_BshC"/>
    <property type="match status" value="1"/>
</dbReference>
<dbReference type="Pfam" id="PF24850">
    <property type="entry name" value="CC_BshC"/>
    <property type="match status" value="1"/>
</dbReference>
<dbReference type="Pfam" id="PF10079">
    <property type="entry name" value="Rossmann-like_BshC"/>
    <property type="match status" value="1"/>
</dbReference>
<dbReference type="PIRSF" id="PIRSF012535">
    <property type="entry name" value="UCP012535"/>
    <property type="match status" value="1"/>
</dbReference>
<evidence type="ECO:0000255" key="1">
    <source>
        <dbReference type="HAMAP-Rule" id="MF_01867"/>
    </source>
</evidence>
<comment type="function">
    <text evidence="1">Involved in bacillithiol (BSH) biosynthesis. May catalyze the last step of the pathway, the addition of cysteine to glucosamine malate (GlcN-Mal) to generate BSH.</text>
</comment>
<comment type="similarity">
    <text evidence="1">Belongs to the BshC family.</text>
</comment>
<accession>B1HPX8</accession>
<gene>
    <name evidence="1" type="primary">bshC</name>
    <name type="ordered locus">Bsph_1424</name>
</gene>
<sequence length="538" mass="62732">MKLESIQVPIKNNVLADYWSPNTAIHQFFEYEFNDQAFEKRAKHLAQHARDQKELTAIIRQFMEPLGLSQKANEHLQQLEQGAMVIIGGQQAGILTGPLYSVHKAISVIVLAKEQSVKLQRSVVPVFWIAGEDHDLEEINHTYTVHGELLKKRAYSERSRRKTMASATMLNKESMTQFIHTVVRDIGETEYTEALIKQLVDVLNESETFTDFFARLMNQLFKDEGLLLIDAADYNFRQYESTNFTHIIQHSEEIARVVTEKEEQLERTGYGKPILATREAANLFYVEDGERHLLERKNDLFINLAANLKFTREELLEIAEKYPERLSNNVVSRPLMQEMTFPVLAFVGGPGELAYWATLKSAFSVLDLQMPIFAPRLHMTIVTRHVEQLLREHQLSVTDVWNGKALEMKERFIHDVQDIEAKRQIQAMEQLLAEKYSELASYLEEQHLTLDKILVKNQENHAKQFDYLQQKIEQTVLDKHETTIRKFTTLQNELYPNEGFQERTYNPYQYFNEFGPMLIAEMLKQNYSIGKHHYLLYL</sequence>
<name>BSHC_LYSSC</name>
<proteinExistence type="inferred from homology"/>
<keyword id="KW-0175">Coiled coil</keyword>
<keyword id="KW-0436">Ligase</keyword>
<feature type="chain" id="PRO_0000378242" description="Putative cysteine ligase BshC">
    <location>
        <begin position="1"/>
        <end position="538"/>
    </location>
</feature>
<feature type="coiled-coil region" evidence="1">
    <location>
        <begin position="419"/>
        <end position="445"/>
    </location>
</feature>
<reference key="1">
    <citation type="journal article" date="2008" name="J. Bacteriol.">
        <title>Complete genome sequence of the mosquitocidal bacterium Bacillus sphaericus C3-41 and comparison with those of closely related Bacillus species.</title>
        <authorList>
            <person name="Hu X."/>
            <person name="Fan W."/>
            <person name="Han B."/>
            <person name="Liu H."/>
            <person name="Zheng D."/>
            <person name="Li Q."/>
            <person name="Dong W."/>
            <person name="Yan J."/>
            <person name="Gao M."/>
            <person name="Berry C."/>
            <person name="Yuan Z."/>
        </authorList>
    </citation>
    <scope>NUCLEOTIDE SEQUENCE [LARGE SCALE GENOMIC DNA]</scope>
    <source>
        <strain>C3-41</strain>
    </source>
</reference>
<protein>
    <recommendedName>
        <fullName evidence="1">Putative cysteine ligase BshC</fullName>
        <ecNumber evidence="1">6.-.-.-</ecNumber>
    </recommendedName>
</protein>